<name>XYN2_GEOSE</name>
<evidence type="ECO:0000250" key="1"/>
<evidence type="ECO:0000255" key="2">
    <source>
        <dbReference type="PROSITE-ProRule" id="PRU01096"/>
    </source>
</evidence>
<evidence type="ECO:0000255" key="3">
    <source>
        <dbReference type="PROSITE-ProRule" id="PRU10061"/>
    </source>
</evidence>
<evidence type="ECO:0000305" key="4"/>
<gene>
    <name type="primary">xynA</name>
</gene>
<dbReference type="EC" id="3.2.1.8"/>
<dbReference type="EMBL" id="D28121">
    <property type="protein sequence ID" value="BAA05668.1"/>
    <property type="molecule type" value="Genomic_DNA"/>
</dbReference>
<dbReference type="PIR" id="I39760">
    <property type="entry name" value="I39760"/>
</dbReference>
<dbReference type="SMR" id="P45703"/>
<dbReference type="CAZy" id="GH10">
    <property type="family name" value="Glycoside Hydrolase Family 10"/>
</dbReference>
<dbReference type="UniPathway" id="UPA00114"/>
<dbReference type="GO" id="GO:0005737">
    <property type="term" value="C:cytoplasm"/>
    <property type="evidence" value="ECO:0007669"/>
    <property type="project" value="UniProtKB-SubCell"/>
</dbReference>
<dbReference type="GO" id="GO:0031176">
    <property type="term" value="F:endo-1,4-beta-xylanase activity"/>
    <property type="evidence" value="ECO:0007669"/>
    <property type="project" value="UniProtKB-EC"/>
</dbReference>
<dbReference type="GO" id="GO:0045493">
    <property type="term" value="P:xylan catabolic process"/>
    <property type="evidence" value="ECO:0007669"/>
    <property type="project" value="UniProtKB-UniPathway"/>
</dbReference>
<dbReference type="Gene3D" id="3.20.20.80">
    <property type="entry name" value="Glycosidases"/>
    <property type="match status" value="1"/>
</dbReference>
<dbReference type="InterPro" id="IPR044846">
    <property type="entry name" value="GH10"/>
</dbReference>
<dbReference type="InterPro" id="IPR031158">
    <property type="entry name" value="GH10_AS"/>
</dbReference>
<dbReference type="InterPro" id="IPR001000">
    <property type="entry name" value="GH10_dom"/>
</dbReference>
<dbReference type="InterPro" id="IPR017853">
    <property type="entry name" value="Glycoside_hydrolase_SF"/>
</dbReference>
<dbReference type="PANTHER" id="PTHR31490:SF90">
    <property type="entry name" value="ENDO-1,4-BETA-XYLANASE A"/>
    <property type="match status" value="1"/>
</dbReference>
<dbReference type="PANTHER" id="PTHR31490">
    <property type="entry name" value="GLYCOSYL HYDROLASE"/>
    <property type="match status" value="1"/>
</dbReference>
<dbReference type="Pfam" id="PF00331">
    <property type="entry name" value="Glyco_hydro_10"/>
    <property type="match status" value="1"/>
</dbReference>
<dbReference type="PRINTS" id="PR00134">
    <property type="entry name" value="GLHYDRLASE10"/>
</dbReference>
<dbReference type="SMART" id="SM00633">
    <property type="entry name" value="Glyco_10"/>
    <property type="match status" value="1"/>
</dbReference>
<dbReference type="SUPFAM" id="SSF51445">
    <property type="entry name" value="(Trans)glycosidases"/>
    <property type="match status" value="1"/>
</dbReference>
<dbReference type="PROSITE" id="PS00591">
    <property type="entry name" value="GH10_1"/>
    <property type="match status" value="1"/>
</dbReference>
<dbReference type="PROSITE" id="PS51760">
    <property type="entry name" value="GH10_2"/>
    <property type="match status" value="1"/>
</dbReference>
<protein>
    <recommendedName>
        <fullName>Endo-1,4-beta-xylanase</fullName>
        <shortName>Xylanase</shortName>
        <ecNumber>3.2.1.8</ecNumber>
    </recommendedName>
    <alternativeName>
        <fullName>1,4-beta-D-xylan xylanohydrolase</fullName>
    </alternativeName>
</protein>
<organism>
    <name type="scientific">Geobacillus stearothermophilus</name>
    <name type="common">Bacillus stearothermophilus</name>
    <dbReference type="NCBI Taxonomy" id="1422"/>
    <lineage>
        <taxon>Bacteria</taxon>
        <taxon>Bacillati</taxon>
        <taxon>Bacillota</taxon>
        <taxon>Bacilli</taxon>
        <taxon>Bacillales</taxon>
        <taxon>Anoxybacillaceae</taxon>
        <taxon>Geobacillus</taxon>
    </lineage>
</organism>
<reference key="1">
    <citation type="journal article" date="1994" name="Appl. Environ. Microbiol.">
        <title>Identification and characterization of clustered genes for thermostable xylan-degrading enzymes, beta-xylosidase and xylanase, of Bacillus stearothermophilus 21.</title>
        <authorList>
            <person name="Baba T."/>
            <person name="Shinke R."/>
            <person name="Nanmori T."/>
        </authorList>
    </citation>
    <scope>NUCLEOTIDE SEQUENCE [GENOMIC DNA]</scope>
    <scope>PROTEIN SEQUENCE OF 3-7</scope>
    <source>
        <strain>No. 21</strain>
    </source>
</reference>
<feature type="chain" id="PRO_0000007969" description="Endo-1,4-beta-xylanase">
    <location>
        <begin position="1"/>
        <end position="330"/>
    </location>
</feature>
<feature type="domain" description="GH10" evidence="2">
    <location>
        <begin position="2"/>
        <end position="330"/>
    </location>
</feature>
<feature type="active site" description="Proton donor" evidence="1">
    <location>
        <position position="133"/>
    </location>
</feature>
<feature type="active site" description="Nucleophile" evidence="3">
    <location>
        <position position="240"/>
    </location>
</feature>
<sequence length="330" mass="38473">MCSSIPSLREVFANDFRIGAAVNPVTLEAQQSLLIRHVNSLTAENHMKFEHLQPEEGRFTFDIAIKSSTSPFSSHGVRGHTLVWHNQTPSWVFQDSQGHFVGRDVLLERMKSHISTVVQRYKGKVYCWDVINEAVADEGSEWLRSSTWRQIIGDDFIQQAFLYAHEADPEALLFYNDYNECFPEKREKIYTLVKSLRDKGIPIHGIGMQAHWSLNRPTLDEIRAAIERYASLGVILHITELDISMFEFDDHRKDLAAPTNEMVERQAERYEQIFSLFKEYRDVIQNVTFWGIADDHTWLDHFPVQGRKNWPLLFDEQHNPKPAFWRVVNI</sequence>
<accession>P45703</accession>
<comment type="catalytic activity">
    <reaction>
        <text>Endohydrolysis of (1-&gt;4)-beta-D-xylosidic linkages in xylans.</text>
        <dbReference type="EC" id="3.2.1.8"/>
    </reaction>
</comment>
<comment type="pathway">
    <text>Glycan degradation; xylan degradation.</text>
</comment>
<comment type="subcellular location">
    <subcellularLocation>
        <location evidence="1">Cytoplasm</location>
    </subcellularLocation>
</comment>
<comment type="induction">
    <text>By xylan and xylose.</text>
</comment>
<comment type="similarity">
    <text evidence="4">Belongs to the glycosyl hydrolase 10 (cellulase F) family. Cytoplasmic xylanase subfamily.</text>
</comment>
<keyword id="KW-0119">Carbohydrate metabolism</keyword>
<keyword id="KW-0963">Cytoplasm</keyword>
<keyword id="KW-0903">Direct protein sequencing</keyword>
<keyword id="KW-0326">Glycosidase</keyword>
<keyword id="KW-0378">Hydrolase</keyword>
<keyword id="KW-0624">Polysaccharide degradation</keyword>
<keyword id="KW-0858">Xylan degradation</keyword>
<proteinExistence type="evidence at protein level"/>